<sequence>MRSNTCVLEQHDSECINLILLVNATSFTKQQQQQHNFNYQRLQHRITPPPPPSSPLLPKKEFNSIDLSILDKQLYLDNNNNNNNNTINNNTNNIKKDNNDCDDDDDSKSDKNSDDDTNDSDVNSNNNNGNHQKKKINKKLKKDGTNHLKRFKKLNHIKKKLININSILVSNVSPINQ</sequence>
<organism>
    <name type="scientific">Dictyostelium discoideum</name>
    <name type="common">Social amoeba</name>
    <dbReference type="NCBI Taxonomy" id="44689"/>
    <lineage>
        <taxon>Eukaryota</taxon>
        <taxon>Amoebozoa</taxon>
        <taxon>Evosea</taxon>
        <taxon>Eumycetozoa</taxon>
        <taxon>Dictyostelia</taxon>
        <taxon>Dictyosteliales</taxon>
        <taxon>Dictyosteliaceae</taxon>
        <taxon>Dictyostelium</taxon>
    </lineage>
</organism>
<evidence type="ECO:0000256" key="1">
    <source>
        <dbReference type="SAM" id="MobiDB-lite"/>
    </source>
</evidence>
<name>Y9278_DICDI</name>
<feature type="chain" id="PRO_0000347010" description="Putative uncharacterized protein DDB_G0287893">
    <location>
        <begin position="1"/>
        <end position="177"/>
    </location>
</feature>
<feature type="region of interest" description="Disordered" evidence="1">
    <location>
        <begin position="78"/>
        <end position="146"/>
    </location>
</feature>
<feature type="compositionally biased region" description="Low complexity" evidence="1">
    <location>
        <begin position="78"/>
        <end position="93"/>
    </location>
</feature>
<feature type="compositionally biased region" description="Low complexity" evidence="1">
    <location>
        <begin position="120"/>
        <end position="130"/>
    </location>
</feature>
<feature type="compositionally biased region" description="Basic residues" evidence="1">
    <location>
        <begin position="131"/>
        <end position="146"/>
    </location>
</feature>
<keyword id="KW-1185">Reference proteome</keyword>
<proteinExistence type="predicted"/>
<protein>
    <recommendedName>
        <fullName>Putative uncharacterized protein DDB_G0287893</fullName>
    </recommendedName>
</protein>
<reference key="1">
    <citation type="journal article" date="2005" name="Nature">
        <title>The genome of the social amoeba Dictyostelium discoideum.</title>
        <authorList>
            <person name="Eichinger L."/>
            <person name="Pachebat J.A."/>
            <person name="Gloeckner G."/>
            <person name="Rajandream M.A."/>
            <person name="Sucgang R."/>
            <person name="Berriman M."/>
            <person name="Song J."/>
            <person name="Olsen R."/>
            <person name="Szafranski K."/>
            <person name="Xu Q."/>
            <person name="Tunggal B."/>
            <person name="Kummerfeld S."/>
            <person name="Madera M."/>
            <person name="Konfortov B.A."/>
            <person name="Rivero F."/>
            <person name="Bankier A.T."/>
            <person name="Lehmann R."/>
            <person name="Hamlin N."/>
            <person name="Davies R."/>
            <person name="Gaudet P."/>
            <person name="Fey P."/>
            <person name="Pilcher K."/>
            <person name="Chen G."/>
            <person name="Saunders D."/>
            <person name="Sodergren E.J."/>
            <person name="Davis P."/>
            <person name="Kerhornou A."/>
            <person name="Nie X."/>
            <person name="Hall N."/>
            <person name="Anjard C."/>
            <person name="Hemphill L."/>
            <person name="Bason N."/>
            <person name="Farbrother P."/>
            <person name="Desany B."/>
            <person name="Just E."/>
            <person name="Morio T."/>
            <person name="Rost R."/>
            <person name="Churcher C.M."/>
            <person name="Cooper J."/>
            <person name="Haydock S."/>
            <person name="van Driessche N."/>
            <person name="Cronin A."/>
            <person name="Goodhead I."/>
            <person name="Muzny D.M."/>
            <person name="Mourier T."/>
            <person name="Pain A."/>
            <person name="Lu M."/>
            <person name="Harper D."/>
            <person name="Lindsay R."/>
            <person name="Hauser H."/>
            <person name="James K.D."/>
            <person name="Quiles M."/>
            <person name="Madan Babu M."/>
            <person name="Saito T."/>
            <person name="Buchrieser C."/>
            <person name="Wardroper A."/>
            <person name="Felder M."/>
            <person name="Thangavelu M."/>
            <person name="Johnson D."/>
            <person name="Knights A."/>
            <person name="Loulseged H."/>
            <person name="Mungall K.L."/>
            <person name="Oliver K."/>
            <person name="Price C."/>
            <person name="Quail M.A."/>
            <person name="Urushihara H."/>
            <person name="Hernandez J."/>
            <person name="Rabbinowitsch E."/>
            <person name="Steffen D."/>
            <person name="Sanders M."/>
            <person name="Ma J."/>
            <person name="Kohara Y."/>
            <person name="Sharp S."/>
            <person name="Simmonds M.N."/>
            <person name="Spiegler S."/>
            <person name="Tivey A."/>
            <person name="Sugano S."/>
            <person name="White B."/>
            <person name="Walker D."/>
            <person name="Woodward J.R."/>
            <person name="Winckler T."/>
            <person name="Tanaka Y."/>
            <person name="Shaulsky G."/>
            <person name="Schleicher M."/>
            <person name="Weinstock G.M."/>
            <person name="Rosenthal A."/>
            <person name="Cox E.C."/>
            <person name="Chisholm R.L."/>
            <person name="Gibbs R.A."/>
            <person name="Loomis W.F."/>
            <person name="Platzer M."/>
            <person name="Kay R.R."/>
            <person name="Williams J.G."/>
            <person name="Dear P.H."/>
            <person name="Noegel A.A."/>
            <person name="Barrell B.G."/>
            <person name="Kuspa A."/>
        </authorList>
    </citation>
    <scope>NUCLEOTIDE SEQUENCE [LARGE SCALE GENOMIC DNA]</scope>
    <source>
        <strain>AX4</strain>
    </source>
</reference>
<accession>Q54JR5</accession>
<gene>
    <name type="ORF">DDB_G0287893</name>
</gene>
<dbReference type="EMBL" id="AAFI02000104">
    <property type="protein sequence ID" value="EAL63593.1"/>
    <property type="molecule type" value="Genomic_DNA"/>
</dbReference>
<dbReference type="RefSeq" id="XP_637087.1">
    <property type="nucleotide sequence ID" value="XM_631995.1"/>
</dbReference>
<dbReference type="PaxDb" id="44689-DDB0219278"/>
<dbReference type="EnsemblProtists" id="EAL63593">
    <property type="protein sequence ID" value="EAL63593"/>
    <property type="gene ID" value="DDB_G0287893"/>
</dbReference>
<dbReference type="GeneID" id="8626342"/>
<dbReference type="KEGG" id="ddi:DDB_G0287893"/>
<dbReference type="dictyBase" id="DDB_G0287893"/>
<dbReference type="VEuPathDB" id="AmoebaDB:DDB_G0287893"/>
<dbReference type="eggNOG" id="ENOG502RIGP">
    <property type="taxonomic scope" value="Eukaryota"/>
</dbReference>
<dbReference type="HOGENOM" id="CLU_1520570_0_0_1"/>
<dbReference type="InParanoid" id="Q54JR5"/>
<dbReference type="PRO" id="PR:Q54JR5"/>
<dbReference type="Proteomes" id="UP000002195">
    <property type="component" value="Chromosome 5"/>
</dbReference>